<proteinExistence type="inferred from homology"/>
<dbReference type="EMBL" id="CP000660">
    <property type="protein sequence ID" value="ABP50634.1"/>
    <property type="molecule type" value="Genomic_DNA"/>
</dbReference>
<dbReference type="STRING" id="340102.Pars_1056"/>
<dbReference type="KEGG" id="pas:Pars_1056"/>
<dbReference type="HOGENOM" id="CLU_079268_0_0_2"/>
<dbReference type="OrthoDB" id="21331at2157"/>
<dbReference type="PhylomeDB" id="A4WJR7"/>
<dbReference type="Proteomes" id="UP000001567">
    <property type="component" value="Chromosome"/>
</dbReference>
<dbReference type="Gene3D" id="3.60.15.10">
    <property type="entry name" value="Ribonuclease Z/Hydroxyacylglutathione hydrolase-like"/>
    <property type="match status" value="1"/>
</dbReference>
<dbReference type="HAMAP" id="MF_01406">
    <property type="entry name" value="UPF0282"/>
    <property type="match status" value="1"/>
</dbReference>
<dbReference type="InterPro" id="IPR036866">
    <property type="entry name" value="RibonucZ/Hydroxyglut_hydro"/>
</dbReference>
<dbReference type="InterPro" id="IPR050114">
    <property type="entry name" value="UPF0173_UPF0282_UlaG_hydrolase"/>
</dbReference>
<dbReference type="InterPro" id="IPR014426">
    <property type="entry name" value="UPF0282_hydrls"/>
</dbReference>
<dbReference type="PANTHER" id="PTHR43546">
    <property type="entry name" value="UPF0173 METAL-DEPENDENT HYDROLASE MJ1163-RELATED"/>
    <property type="match status" value="1"/>
</dbReference>
<dbReference type="PANTHER" id="PTHR43546:SF4">
    <property type="entry name" value="UPF0282 PROTEIN MJ1629"/>
    <property type="match status" value="1"/>
</dbReference>
<dbReference type="Pfam" id="PF13483">
    <property type="entry name" value="Lactamase_B_3"/>
    <property type="match status" value="1"/>
</dbReference>
<dbReference type="PIRSF" id="PIRSF004944">
    <property type="entry name" value="UCP004944_hydrls"/>
    <property type="match status" value="1"/>
</dbReference>
<dbReference type="SUPFAM" id="SSF56281">
    <property type="entry name" value="Metallo-hydrolase/oxidoreductase"/>
    <property type="match status" value="1"/>
</dbReference>
<comment type="similarity">
    <text evidence="1">Belongs to the UPF0282 family.</text>
</comment>
<organism>
    <name type="scientific">Pyrobaculum arsenaticum (strain DSM 13514 / JCM 11321 / PZ6)</name>
    <dbReference type="NCBI Taxonomy" id="340102"/>
    <lineage>
        <taxon>Archaea</taxon>
        <taxon>Thermoproteota</taxon>
        <taxon>Thermoprotei</taxon>
        <taxon>Thermoproteales</taxon>
        <taxon>Thermoproteaceae</taxon>
        <taxon>Pyrobaculum</taxon>
    </lineage>
</organism>
<accession>A4WJR7</accession>
<reference key="1">
    <citation type="submission" date="2007-04" db="EMBL/GenBank/DDBJ databases">
        <title>Complete sequence of Pyrobaculum arsenaticum DSM 13514.</title>
        <authorList>
            <consortium name="US DOE Joint Genome Institute"/>
            <person name="Copeland A."/>
            <person name="Lucas S."/>
            <person name="Lapidus A."/>
            <person name="Barry K."/>
            <person name="Glavina del Rio T."/>
            <person name="Dalin E."/>
            <person name="Tice H."/>
            <person name="Pitluck S."/>
            <person name="Chain P."/>
            <person name="Malfatti S."/>
            <person name="Shin M."/>
            <person name="Vergez L."/>
            <person name="Schmutz J."/>
            <person name="Larimer F."/>
            <person name="Land M."/>
            <person name="Hauser L."/>
            <person name="Kyrpides N."/>
            <person name="Mikhailova N."/>
            <person name="Cozen A.E."/>
            <person name="Fitz-Gibbon S.T."/>
            <person name="House C.H."/>
            <person name="Saltikov C."/>
            <person name="Lowe T.M."/>
            <person name="Richardson P."/>
        </authorList>
    </citation>
    <scope>NUCLEOTIDE SEQUENCE [LARGE SCALE GENOMIC DNA]</scope>
    <source>
        <strain>ATCC 700994 / DSM 13514 / JCM 11321 / PZ6</strain>
    </source>
</reference>
<sequence length="306" mass="34023">MEILPVGEESLGVRSMCLYVETRDVRILFDAGVSLAPRRFGLPPHPRELERARSVRGEIVRLAQQADIITVSHYHRDHFTPWYPSVYMATDGETYKKVYGGKKVLMKSPADLNWSQRRRHYGLAKALQEAGAKAVYADGGEWRIGGTVIRASPPLWHGPAGSKTGRVIAFAVSDGEERLVFVPDVEGPVEPEPVAFLEEVKPTVVVVGGPPTYLGWELERALQRLTEIIDIGPHTLVLAHHLLRDLAWREKIEAVLQRAEKRGVRVATYAGLLGRKDELLEAMRRDLYAAEPAAAQPAEEGIDEGD</sequence>
<gene>
    <name type="ordered locus">Pars_1056</name>
</gene>
<name>Y1056_PYRAR</name>
<feature type="chain" id="PRO_1000068435" description="UPF0282 protein Pars_1056">
    <location>
        <begin position="1"/>
        <end position="306"/>
    </location>
</feature>
<protein>
    <recommendedName>
        <fullName evidence="1">UPF0282 protein Pars_1056</fullName>
    </recommendedName>
</protein>
<evidence type="ECO:0000255" key="1">
    <source>
        <dbReference type="HAMAP-Rule" id="MF_01406"/>
    </source>
</evidence>